<sequence>MIQKETNLVVADNSGAKKVRCIHVFGGTGRRYAAIGDQIMVTVKAAVPGGVVKKKDVCKAVVVRCAKEKKRKDGSYIRFDENAVVLLNAQGEPRGTRIFGPVARELRDRKYMKIVSLAPEVL</sequence>
<reference key="1">
    <citation type="submission" date="2008-06" db="EMBL/GenBank/DDBJ databases">
        <title>Complete sequence of chromosome of Prosthecochloris aestuarii DSM 271.</title>
        <authorList>
            <consortium name="US DOE Joint Genome Institute"/>
            <person name="Lucas S."/>
            <person name="Copeland A."/>
            <person name="Lapidus A."/>
            <person name="Glavina del Rio T."/>
            <person name="Dalin E."/>
            <person name="Tice H."/>
            <person name="Bruce D."/>
            <person name="Goodwin L."/>
            <person name="Pitluck S."/>
            <person name="Schmutz J."/>
            <person name="Larimer F."/>
            <person name="Land M."/>
            <person name="Hauser L."/>
            <person name="Kyrpides N."/>
            <person name="Anderson I."/>
            <person name="Liu Z."/>
            <person name="Li T."/>
            <person name="Zhao F."/>
            <person name="Overmann J."/>
            <person name="Bryant D.A."/>
            <person name="Richardson P."/>
        </authorList>
    </citation>
    <scope>NUCLEOTIDE SEQUENCE [LARGE SCALE GENOMIC DNA]</scope>
    <source>
        <strain>DSM 271 / SK 413</strain>
    </source>
</reference>
<name>RL14_PROA2</name>
<gene>
    <name evidence="1" type="primary">rplN</name>
    <name type="ordered locus">Paes_2054</name>
</gene>
<protein>
    <recommendedName>
        <fullName evidence="1">Large ribosomal subunit protein uL14</fullName>
    </recommendedName>
    <alternativeName>
        <fullName evidence="2">50S ribosomal protein L14</fullName>
    </alternativeName>
</protein>
<comment type="function">
    <text evidence="1">Binds to 23S rRNA. Forms part of two intersubunit bridges in the 70S ribosome.</text>
</comment>
<comment type="subunit">
    <text evidence="1">Part of the 50S ribosomal subunit. Forms a cluster with proteins L3 and L19. In the 70S ribosome, L14 and L19 interact and together make contacts with the 16S rRNA in bridges B5 and B8.</text>
</comment>
<comment type="similarity">
    <text evidence="1">Belongs to the universal ribosomal protein uL14 family.</text>
</comment>
<dbReference type="EMBL" id="CP001108">
    <property type="protein sequence ID" value="ACF47064.1"/>
    <property type="molecule type" value="Genomic_DNA"/>
</dbReference>
<dbReference type="RefSeq" id="WP_012506596.1">
    <property type="nucleotide sequence ID" value="NC_011059.1"/>
</dbReference>
<dbReference type="SMR" id="B4S5B8"/>
<dbReference type="STRING" id="290512.Paes_2054"/>
<dbReference type="KEGG" id="paa:Paes_2054"/>
<dbReference type="eggNOG" id="COG0093">
    <property type="taxonomic scope" value="Bacteria"/>
</dbReference>
<dbReference type="HOGENOM" id="CLU_095071_2_1_10"/>
<dbReference type="Proteomes" id="UP000002725">
    <property type="component" value="Chromosome"/>
</dbReference>
<dbReference type="GO" id="GO:0022625">
    <property type="term" value="C:cytosolic large ribosomal subunit"/>
    <property type="evidence" value="ECO:0007669"/>
    <property type="project" value="TreeGrafter"/>
</dbReference>
<dbReference type="GO" id="GO:0070180">
    <property type="term" value="F:large ribosomal subunit rRNA binding"/>
    <property type="evidence" value="ECO:0007669"/>
    <property type="project" value="TreeGrafter"/>
</dbReference>
<dbReference type="GO" id="GO:0003735">
    <property type="term" value="F:structural constituent of ribosome"/>
    <property type="evidence" value="ECO:0007669"/>
    <property type="project" value="InterPro"/>
</dbReference>
<dbReference type="GO" id="GO:0006412">
    <property type="term" value="P:translation"/>
    <property type="evidence" value="ECO:0007669"/>
    <property type="project" value="UniProtKB-UniRule"/>
</dbReference>
<dbReference type="CDD" id="cd00337">
    <property type="entry name" value="Ribosomal_uL14"/>
    <property type="match status" value="1"/>
</dbReference>
<dbReference type="FunFam" id="2.40.150.20:FF:000001">
    <property type="entry name" value="50S ribosomal protein L14"/>
    <property type="match status" value="1"/>
</dbReference>
<dbReference type="Gene3D" id="2.40.150.20">
    <property type="entry name" value="Ribosomal protein L14"/>
    <property type="match status" value="1"/>
</dbReference>
<dbReference type="HAMAP" id="MF_01367">
    <property type="entry name" value="Ribosomal_uL14"/>
    <property type="match status" value="1"/>
</dbReference>
<dbReference type="InterPro" id="IPR000218">
    <property type="entry name" value="Ribosomal_uL14"/>
</dbReference>
<dbReference type="InterPro" id="IPR005745">
    <property type="entry name" value="Ribosomal_uL14_bac-type"/>
</dbReference>
<dbReference type="InterPro" id="IPR019972">
    <property type="entry name" value="Ribosomal_uL14_CS"/>
</dbReference>
<dbReference type="InterPro" id="IPR036853">
    <property type="entry name" value="Ribosomal_uL14_sf"/>
</dbReference>
<dbReference type="NCBIfam" id="TIGR01067">
    <property type="entry name" value="rplN_bact"/>
    <property type="match status" value="1"/>
</dbReference>
<dbReference type="PANTHER" id="PTHR11761">
    <property type="entry name" value="50S/60S RIBOSOMAL PROTEIN L14/L23"/>
    <property type="match status" value="1"/>
</dbReference>
<dbReference type="PANTHER" id="PTHR11761:SF3">
    <property type="entry name" value="LARGE RIBOSOMAL SUBUNIT PROTEIN UL14M"/>
    <property type="match status" value="1"/>
</dbReference>
<dbReference type="Pfam" id="PF00238">
    <property type="entry name" value="Ribosomal_L14"/>
    <property type="match status" value="1"/>
</dbReference>
<dbReference type="SMART" id="SM01374">
    <property type="entry name" value="Ribosomal_L14"/>
    <property type="match status" value="1"/>
</dbReference>
<dbReference type="SUPFAM" id="SSF50193">
    <property type="entry name" value="Ribosomal protein L14"/>
    <property type="match status" value="1"/>
</dbReference>
<dbReference type="PROSITE" id="PS00049">
    <property type="entry name" value="RIBOSOMAL_L14"/>
    <property type="match status" value="1"/>
</dbReference>
<proteinExistence type="inferred from homology"/>
<feature type="chain" id="PRO_1000144311" description="Large ribosomal subunit protein uL14">
    <location>
        <begin position="1"/>
        <end position="122"/>
    </location>
</feature>
<evidence type="ECO:0000255" key="1">
    <source>
        <dbReference type="HAMAP-Rule" id="MF_01367"/>
    </source>
</evidence>
<evidence type="ECO:0000305" key="2"/>
<organism>
    <name type="scientific">Prosthecochloris aestuarii (strain DSM 271 / SK 413)</name>
    <dbReference type="NCBI Taxonomy" id="290512"/>
    <lineage>
        <taxon>Bacteria</taxon>
        <taxon>Pseudomonadati</taxon>
        <taxon>Chlorobiota</taxon>
        <taxon>Chlorobiia</taxon>
        <taxon>Chlorobiales</taxon>
        <taxon>Chlorobiaceae</taxon>
        <taxon>Prosthecochloris</taxon>
    </lineage>
</organism>
<accession>B4S5B8</accession>
<keyword id="KW-0687">Ribonucleoprotein</keyword>
<keyword id="KW-0689">Ribosomal protein</keyword>
<keyword id="KW-0694">RNA-binding</keyword>
<keyword id="KW-0699">rRNA-binding</keyword>